<proteinExistence type="inferred from homology"/>
<evidence type="ECO:0000255" key="1">
    <source>
        <dbReference type="HAMAP-Rule" id="MF_01526"/>
    </source>
</evidence>
<name>Y691_STRPB</name>
<comment type="similarity">
    <text evidence="1">Belongs to the UPF0342 family.</text>
</comment>
<gene>
    <name type="ordered locus">MGAS2096_Spy0691</name>
</gene>
<accession>Q1JCG5</accession>
<organism>
    <name type="scientific">Streptococcus pyogenes serotype M12 (strain MGAS2096)</name>
    <dbReference type="NCBI Taxonomy" id="370553"/>
    <lineage>
        <taxon>Bacteria</taxon>
        <taxon>Bacillati</taxon>
        <taxon>Bacillota</taxon>
        <taxon>Bacilli</taxon>
        <taxon>Lactobacillales</taxon>
        <taxon>Streptococcaceae</taxon>
        <taxon>Streptococcus</taxon>
    </lineage>
</organism>
<protein>
    <recommendedName>
        <fullName evidence="1">UPF0342 protein MGAS2096_Spy0691</fullName>
    </recommendedName>
</protein>
<sequence length="113" mass="12900">MSQEIYDYANQLERAVRALPEYQKVLEVKEAIQADASASELFDEFVAMQEKIQGMMQSGQMPTAEEQTSIQELSQKIEANDQLKAYFEAQQALSVYMSDIERIVFAPLKDLVK</sequence>
<reference key="1">
    <citation type="journal article" date="2006" name="Proc. Natl. Acad. Sci. U.S.A.">
        <title>Molecular genetic anatomy of inter- and intraserotype variation in the human bacterial pathogen group A Streptococcus.</title>
        <authorList>
            <person name="Beres S.B."/>
            <person name="Richter E.W."/>
            <person name="Nagiec M.J."/>
            <person name="Sumby P."/>
            <person name="Porcella S.F."/>
            <person name="DeLeo F.R."/>
            <person name="Musser J.M."/>
        </authorList>
    </citation>
    <scope>NUCLEOTIDE SEQUENCE [LARGE SCALE GENOMIC DNA]</scope>
    <source>
        <strain>MGAS2096</strain>
    </source>
</reference>
<feature type="chain" id="PRO_0000292747" description="UPF0342 protein MGAS2096_Spy0691">
    <location>
        <begin position="1"/>
        <end position="113"/>
    </location>
</feature>
<dbReference type="EMBL" id="CP000261">
    <property type="protein sequence ID" value="ABF35743.1"/>
    <property type="molecule type" value="Genomic_DNA"/>
</dbReference>
<dbReference type="SMR" id="Q1JCG5"/>
<dbReference type="KEGG" id="spj:MGAS2096_Spy0691"/>
<dbReference type="HOGENOM" id="CLU_140243_2_0_9"/>
<dbReference type="Gene3D" id="1.20.1500.10">
    <property type="entry name" value="YheA/YmcA-like"/>
    <property type="match status" value="1"/>
</dbReference>
<dbReference type="HAMAP" id="MF_01526">
    <property type="entry name" value="UPF0342"/>
    <property type="match status" value="1"/>
</dbReference>
<dbReference type="InterPro" id="IPR010368">
    <property type="entry name" value="Com_YlbF"/>
</dbReference>
<dbReference type="InterPro" id="IPR023378">
    <property type="entry name" value="YheA/YmcA-like_dom_sf"/>
</dbReference>
<dbReference type="NCBIfam" id="NF010209">
    <property type="entry name" value="PRK13676.1-1"/>
    <property type="match status" value="1"/>
</dbReference>
<dbReference type="Pfam" id="PF06133">
    <property type="entry name" value="Com_YlbF"/>
    <property type="match status" value="1"/>
</dbReference>
<dbReference type="SUPFAM" id="SSF158622">
    <property type="entry name" value="YheA/YmcA-like"/>
    <property type="match status" value="1"/>
</dbReference>